<organism>
    <name type="scientific">Mycoplasmopsis agalactiae (strain NCTC 10123 / CIP 59.7 / PG2)</name>
    <name type="common">Mycoplasma agalactiae</name>
    <dbReference type="NCBI Taxonomy" id="347257"/>
    <lineage>
        <taxon>Bacteria</taxon>
        <taxon>Bacillati</taxon>
        <taxon>Mycoplasmatota</taxon>
        <taxon>Mycoplasmoidales</taxon>
        <taxon>Metamycoplasmataceae</taxon>
        <taxon>Mycoplasmopsis</taxon>
    </lineage>
</organism>
<evidence type="ECO:0000255" key="1">
    <source>
        <dbReference type="HAMAP-Rule" id="MF_01037"/>
    </source>
</evidence>
<dbReference type="EC" id="2.1.1.74" evidence="1"/>
<dbReference type="EMBL" id="CU179680">
    <property type="protein sequence ID" value="CAL58845.1"/>
    <property type="molecule type" value="Genomic_DNA"/>
</dbReference>
<dbReference type="RefSeq" id="WP_011949327.1">
    <property type="nucleotide sequence ID" value="NC_009497.1"/>
</dbReference>
<dbReference type="SMR" id="A5IXT6"/>
<dbReference type="STRING" id="347257.MAG1470"/>
<dbReference type="GeneID" id="93357912"/>
<dbReference type="KEGG" id="maa:MAG1470"/>
<dbReference type="HOGENOM" id="CLU_033057_1_0_14"/>
<dbReference type="Proteomes" id="UP000007065">
    <property type="component" value="Chromosome"/>
</dbReference>
<dbReference type="GO" id="GO:0005829">
    <property type="term" value="C:cytosol"/>
    <property type="evidence" value="ECO:0007669"/>
    <property type="project" value="TreeGrafter"/>
</dbReference>
<dbReference type="GO" id="GO:0050660">
    <property type="term" value="F:flavin adenine dinucleotide binding"/>
    <property type="evidence" value="ECO:0007669"/>
    <property type="project" value="UniProtKB-UniRule"/>
</dbReference>
<dbReference type="GO" id="GO:0047151">
    <property type="term" value="F:tRNA (uracil(54)-C5)-methyltransferase activity, 5,10-methylenetetrahydrofolate-dependent"/>
    <property type="evidence" value="ECO:0007669"/>
    <property type="project" value="UniProtKB-UniRule"/>
</dbReference>
<dbReference type="GO" id="GO:0030488">
    <property type="term" value="P:tRNA methylation"/>
    <property type="evidence" value="ECO:0007669"/>
    <property type="project" value="TreeGrafter"/>
</dbReference>
<dbReference type="GO" id="GO:0002098">
    <property type="term" value="P:tRNA wobble uridine modification"/>
    <property type="evidence" value="ECO:0007669"/>
    <property type="project" value="TreeGrafter"/>
</dbReference>
<dbReference type="Gene3D" id="3.50.50.60">
    <property type="entry name" value="FAD/NAD(P)-binding domain"/>
    <property type="match status" value="2"/>
</dbReference>
<dbReference type="HAMAP" id="MF_01037">
    <property type="entry name" value="TrmFO"/>
    <property type="match status" value="1"/>
</dbReference>
<dbReference type="InterPro" id="IPR036188">
    <property type="entry name" value="FAD/NAD-bd_sf"/>
</dbReference>
<dbReference type="InterPro" id="IPR002218">
    <property type="entry name" value="MnmG-rel"/>
</dbReference>
<dbReference type="InterPro" id="IPR040131">
    <property type="entry name" value="MnmG_N"/>
</dbReference>
<dbReference type="InterPro" id="IPR004417">
    <property type="entry name" value="TrmFO"/>
</dbReference>
<dbReference type="NCBIfam" id="NF003739">
    <property type="entry name" value="PRK05335.1"/>
    <property type="match status" value="1"/>
</dbReference>
<dbReference type="PANTHER" id="PTHR11806">
    <property type="entry name" value="GLUCOSE INHIBITED DIVISION PROTEIN A"/>
    <property type="match status" value="1"/>
</dbReference>
<dbReference type="PANTHER" id="PTHR11806:SF2">
    <property type="entry name" value="METHYLENETETRAHYDROFOLATE--TRNA-(URACIL-5-)-METHYLTRANSFERASE TRMFO"/>
    <property type="match status" value="1"/>
</dbReference>
<dbReference type="Pfam" id="PF01134">
    <property type="entry name" value="GIDA"/>
    <property type="match status" value="1"/>
</dbReference>
<dbReference type="SUPFAM" id="SSF51905">
    <property type="entry name" value="FAD/NAD(P)-binding domain"/>
    <property type="match status" value="1"/>
</dbReference>
<protein>
    <recommendedName>
        <fullName evidence="1">Methylenetetrahydrofolate--tRNA-(uracil-5-)-methyltransferase TrmFO</fullName>
        <ecNumber evidence="1">2.1.1.74</ecNumber>
    </recommendedName>
    <alternativeName>
        <fullName evidence="1">Folate-dependent tRNA (uracil-5-)-methyltransferase</fullName>
    </alternativeName>
    <alternativeName>
        <fullName evidence="1">Folate-dependent tRNA(M-5-U54)-methyltransferase</fullName>
    </alternativeName>
</protein>
<gene>
    <name evidence="1" type="primary">trmFO</name>
    <name type="ordered locus">MAG1470</name>
</gene>
<comment type="function">
    <text evidence="1">Catalyzes the folate-dependent formation of 5-methyl-uridine at position 54 (M-5-U54) in all tRNAs.</text>
</comment>
<comment type="catalytic activity">
    <reaction evidence="1">
        <text>uridine(54) in tRNA + (6R)-5,10-methylene-5,6,7,8-tetrahydrofolate + NADH + H(+) = 5-methyluridine(54) in tRNA + (6S)-5,6,7,8-tetrahydrofolate + NAD(+)</text>
        <dbReference type="Rhea" id="RHEA:16873"/>
        <dbReference type="Rhea" id="RHEA-COMP:10167"/>
        <dbReference type="Rhea" id="RHEA-COMP:10193"/>
        <dbReference type="ChEBI" id="CHEBI:15378"/>
        <dbReference type="ChEBI" id="CHEBI:15636"/>
        <dbReference type="ChEBI" id="CHEBI:57453"/>
        <dbReference type="ChEBI" id="CHEBI:57540"/>
        <dbReference type="ChEBI" id="CHEBI:57945"/>
        <dbReference type="ChEBI" id="CHEBI:65315"/>
        <dbReference type="ChEBI" id="CHEBI:74447"/>
        <dbReference type="EC" id="2.1.1.74"/>
    </reaction>
</comment>
<comment type="catalytic activity">
    <reaction evidence="1">
        <text>uridine(54) in tRNA + (6R)-5,10-methylene-5,6,7,8-tetrahydrofolate + NADPH + H(+) = 5-methyluridine(54) in tRNA + (6S)-5,6,7,8-tetrahydrofolate + NADP(+)</text>
        <dbReference type="Rhea" id="RHEA:62372"/>
        <dbReference type="Rhea" id="RHEA-COMP:10167"/>
        <dbReference type="Rhea" id="RHEA-COMP:10193"/>
        <dbReference type="ChEBI" id="CHEBI:15378"/>
        <dbReference type="ChEBI" id="CHEBI:15636"/>
        <dbReference type="ChEBI" id="CHEBI:57453"/>
        <dbReference type="ChEBI" id="CHEBI:57783"/>
        <dbReference type="ChEBI" id="CHEBI:58349"/>
        <dbReference type="ChEBI" id="CHEBI:65315"/>
        <dbReference type="ChEBI" id="CHEBI:74447"/>
        <dbReference type="EC" id="2.1.1.74"/>
    </reaction>
</comment>
<comment type="cofactor">
    <cofactor evidence="1">
        <name>FAD</name>
        <dbReference type="ChEBI" id="CHEBI:57692"/>
    </cofactor>
</comment>
<comment type="subcellular location">
    <subcellularLocation>
        <location evidence="1">Cytoplasm</location>
    </subcellularLocation>
</comment>
<comment type="similarity">
    <text evidence="1">Belongs to the MnmG family. TrmFO subfamily.</text>
</comment>
<sequence length="427" mass="48557">MKRVRVIGAGISGSEACYQLLKRNYLVELFEVKSIKKNPIQTNDMFANLAYSDSFHSNEITSAKGLLKQEMRLLDSLIINAADYAKVANEPLLVDRYKFQEYITNYLRSHQNLKIIEKEYITIDDSVPTIIATGPLSSVNLENEIKNLVGESNFNLFDKVEPIVLKSSINLNYVQKSALDDKLFYCTLNKNEFEYLYNLIISAEIFVSPLPNEIKLLHDNGFRSIETVAKSSKNELKNLLQANEIRQTENTYATVLLREDDYNENFLRIVNFQTSIKIPWQNEIIKAVPALANALILRYGVMHKNDYINSANVLDDNFQLKSNPNIFFAGQLTGTDGYVEASASAIICAINVDRYLRNLPKAIPNNKTVIGSLCNYVLIANKEDFQPMEANWGLVESMNLVSYNNEGKKKLSDRAISEIKEFIKQNL</sequence>
<feature type="chain" id="PRO_0000346361" description="Methylenetetrahydrofolate--tRNA-(uracil-5-)-methyltransferase TrmFO">
    <location>
        <begin position="1"/>
        <end position="427"/>
    </location>
</feature>
<feature type="binding site" evidence="1">
    <location>
        <begin position="8"/>
        <end position="13"/>
    </location>
    <ligand>
        <name>FAD</name>
        <dbReference type="ChEBI" id="CHEBI:57692"/>
    </ligand>
</feature>
<name>TRMFO_MYCAP</name>
<reference key="1">
    <citation type="journal article" date="2007" name="PLoS Genet.">
        <title>Being pathogenic, plastic, and sexual while living with a nearly minimal bacterial genome.</title>
        <authorList>
            <person name="Sirand-Pugnet P."/>
            <person name="Lartigue C."/>
            <person name="Marenda M."/>
            <person name="Jacob D."/>
            <person name="Barre A."/>
            <person name="Barbe V."/>
            <person name="Schenowitz C."/>
            <person name="Mangenot S."/>
            <person name="Couloux A."/>
            <person name="Segurens B."/>
            <person name="de Daruvar A."/>
            <person name="Blanchard A."/>
            <person name="Citti C."/>
        </authorList>
    </citation>
    <scope>NUCLEOTIDE SEQUENCE [LARGE SCALE GENOMIC DNA]</scope>
    <source>
        <strain>NCTC 10123 / CIP 59.7 / PG2</strain>
    </source>
</reference>
<proteinExistence type="inferred from homology"/>
<keyword id="KW-0963">Cytoplasm</keyword>
<keyword id="KW-0274">FAD</keyword>
<keyword id="KW-0285">Flavoprotein</keyword>
<keyword id="KW-0489">Methyltransferase</keyword>
<keyword id="KW-0520">NAD</keyword>
<keyword id="KW-0521">NADP</keyword>
<keyword id="KW-1185">Reference proteome</keyword>
<keyword id="KW-0808">Transferase</keyword>
<keyword id="KW-0819">tRNA processing</keyword>
<accession>A5IXT6</accession>